<protein>
    <recommendedName>
        <fullName>Sodium/proline symporter</fullName>
    </recommendedName>
    <alternativeName>
        <fullName>Proline permease</fullName>
    </alternativeName>
</protein>
<proteinExistence type="inferred from homology"/>
<dbReference type="EMBL" id="CP000703">
    <property type="protein sequence ID" value="ABQ49742.1"/>
    <property type="molecule type" value="Genomic_DNA"/>
</dbReference>
<dbReference type="RefSeq" id="WP_000957020.1">
    <property type="nucleotide sequence ID" value="NC_009487.1"/>
</dbReference>
<dbReference type="SMR" id="A5IU69"/>
<dbReference type="KEGG" id="saj:SaurJH9_1957"/>
<dbReference type="HOGENOM" id="CLU_018808_15_2_9"/>
<dbReference type="GO" id="GO:0005886">
    <property type="term" value="C:plasma membrane"/>
    <property type="evidence" value="ECO:0007669"/>
    <property type="project" value="UniProtKB-SubCell"/>
</dbReference>
<dbReference type="GO" id="GO:0015193">
    <property type="term" value="F:L-proline transmembrane transporter activity"/>
    <property type="evidence" value="ECO:0007669"/>
    <property type="project" value="TreeGrafter"/>
</dbReference>
<dbReference type="GO" id="GO:0005298">
    <property type="term" value="F:proline:sodium symporter activity"/>
    <property type="evidence" value="ECO:0007669"/>
    <property type="project" value="InterPro"/>
</dbReference>
<dbReference type="GO" id="GO:0031402">
    <property type="term" value="F:sodium ion binding"/>
    <property type="evidence" value="ECO:0007669"/>
    <property type="project" value="InterPro"/>
</dbReference>
<dbReference type="GO" id="GO:0015824">
    <property type="term" value="P:proline transport"/>
    <property type="evidence" value="ECO:0007669"/>
    <property type="project" value="InterPro"/>
</dbReference>
<dbReference type="CDD" id="cd11475">
    <property type="entry name" value="SLC5sbd_PutP"/>
    <property type="match status" value="1"/>
</dbReference>
<dbReference type="FunFam" id="1.20.1730.10:FF:000002">
    <property type="entry name" value="Sodium/proline symporter"/>
    <property type="match status" value="1"/>
</dbReference>
<dbReference type="Gene3D" id="1.20.1730.10">
    <property type="entry name" value="Sodium/glucose cotransporter"/>
    <property type="match status" value="1"/>
</dbReference>
<dbReference type="InterPro" id="IPR038377">
    <property type="entry name" value="Na/Glc_symporter_sf"/>
</dbReference>
<dbReference type="InterPro" id="IPR011851">
    <property type="entry name" value="Na/Pro_symporter"/>
</dbReference>
<dbReference type="InterPro" id="IPR001734">
    <property type="entry name" value="Na/solute_symporter"/>
</dbReference>
<dbReference type="InterPro" id="IPR050277">
    <property type="entry name" value="Sodium:Solute_Symporter"/>
</dbReference>
<dbReference type="NCBIfam" id="TIGR02121">
    <property type="entry name" value="Na_Pro_sym"/>
    <property type="match status" value="1"/>
</dbReference>
<dbReference type="NCBIfam" id="TIGR00813">
    <property type="entry name" value="sss"/>
    <property type="match status" value="1"/>
</dbReference>
<dbReference type="PANTHER" id="PTHR48086">
    <property type="entry name" value="SODIUM/PROLINE SYMPORTER-RELATED"/>
    <property type="match status" value="1"/>
</dbReference>
<dbReference type="PANTHER" id="PTHR48086:SF3">
    <property type="entry name" value="SODIUM_PROLINE SYMPORTER"/>
    <property type="match status" value="1"/>
</dbReference>
<dbReference type="Pfam" id="PF00474">
    <property type="entry name" value="SSF"/>
    <property type="match status" value="1"/>
</dbReference>
<dbReference type="PROSITE" id="PS50283">
    <property type="entry name" value="NA_SOLUT_SYMP_3"/>
    <property type="match status" value="1"/>
</dbReference>
<feature type="chain" id="PRO_0000364095" description="Sodium/proline symporter">
    <location>
        <begin position="1"/>
        <end position="512"/>
    </location>
</feature>
<feature type="transmembrane region" description="Helical" evidence="3">
    <location>
        <begin position="16"/>
        <end position="36"/>
    </location>
</feature>
<feature type="transmembrane region" description="Helical" evidence="3">
    <location>
        <begin position="54"/>
        <end position="74"/>
    </location>
</feature>
<feature type="transmembrane region" description="Helical" evidence="3">
    <location>
        <begin position="85"/>
        <end position="105"/>
    </location>
</feature>
<feature type="transmembrane region" description="Helical" evidence="3">
    <location>
        <begin position="139"/>
        <end position="159"/>
    </location>
</feature>
<feature type="transmembrane region" description="Helical" evidence="3">
    <location>
        <begin position="174"/>
        <end position="194"/>
    </location>
</feature>
<feature type="transmembrane region" description="Helical" evidence="3">
    <location>
        <begin position="200"/>
        <end position="220"/>
    </location>
</feature>
<feature type="transmembrane region" description="Helical" evidence="3">
    <location>
        <begin position="240"/>
        <end position="260"/>
    </location>
</feature>
<feature type="transmembrane region" description="Helical" evidence="3">
    <location>
        <begin position="286"/>
        <end position="306"/>
    </location>
</feature>
<feature type="transmembrane region" description="Helical" evidence="3">
    <location>
        <begin position="327"/>
        <end position="347"/>
    </location>
</feature>
<feature type="transmembrane region" description="Helical" evidence="3">
    <location>
        <begin position="381"/>
        <end position="401"/>
    </location>
</feature>
<feature type="transmembrane region" description="Helical" evidence="3">
    <location>
        <begin position="410"/>
        <end position="430"/>
    </location>
</feature>
<feature type="transmembrane region" description="Helical" evidence="3">
    <location>
        <begin position="438"/>
        <end position="458"/>
    </location>
</feature>
<feature type="transmembrane region" description="Helical" evidence="3">
    <location>
        <begin position="467"/>
        <end position="487"/>
    </location>
</feature>
<accession>A5IU69</accession>
<organism>
    <name type="scientific">Staphylococcus aureus (strain JH9)</name>
    <dbReference type="NCBI Taxonomy" id="359786"/>
    <lineage>
        <taxon>Bacteria</taxon>
        <taxon>Bacillati</taxon>
        <taxon>Bacillota</taxon>
        <taxon>Bacilli</taxon>
        <taxon>Bacillales</taxon>
        <taxon>Staphylococcaceae</taxon>
        <taxon>Staphylococcus</taxon>
    </lineage>
</organism>
<gene>
    <name type="primary">putP</name>
    <name type="ordered locus">SaurJH9_1957</name>
</gene>
<sequence length="512" mass="55976">MLTMGTALSQQVDANWQTYIMIAVYFLILIVIGFYGYKQATGNLSEYMLGGRSIGPYITALSAGASDMSGWMIMGLPGSVYSTGLSAMWITIGLTLGAYINYFVVAPRLRVYTELAGDAITLPDFFKNRLNDKNNVLKIISGLIIVVFFTLYTHSGFVSGGKLFESAFGLDYHFGLILVAFIVIFYTFFGGYLAVSITDFFQGVIMLIAMVMVPIVAMMNLNGWGTFHDVAAMKPTNLNLFKGLSFIGIISLFSWGLGYFGQPHIIVRFMSIKSHKMLPKARRLGISWMAVGLLGAVAVGLTGIAFVPAYHIKLEDPETLFIVMSQVLFHPLVGGFLLAAILAAIMSTISSQLLVTSSSLTEDFYKLIRGEEKAKTHQKEFVMIGRLSVLVVAIVAIAIAWNPNDTILNLVGNAWAGFGASFSPLVLFALYWKGLTRAGAVSGMVSGALVVIVWIAWIKPLAHINEIFGLYEIIPGFIVSVIVTYVVSKLTKKPGAFVETDLNKVRDIVREK</sequence>
<name>PUTP_STAA9</name>
<evidence type="ECO:0000250" key="1">
    <source>
        <dbReference type="UniProtKB" id="P07117"/>
    </source>
</evidence>
<evidence type="ECO:0000250" key="2">
    <source>
        <dbReference type="UniProtKB" id="Q2FWY7"/>
    </source>
</evidence>
<evidence type="ECO:0000255" key="3"/>
<evidence type="ECO:0000305" key="4"/>
<comment type="function">
    <text evidence="1 2">Catalyzes the sodium-dependent uptake of extracellular L-proline (By similarity). Since most S.aureus strains are L-proline auxotrophs, this transporter may aid the bacterial persistence during an infection of tissues with low proline concentrations (By similarity).</text>
</comment>
<comment type="catalytic activity">
    <reaction evidence="1">
        <text>L-proline(in) + Na(+)(in) = L-proline(out) + Na(+)(out)</text>
        <dbReference type="Rhea" id="RHEA:28967"/>
        <dbReference type="ChEBI" id="CHEBI:29101"/>
        <dbReference type="ChEBI" id="CHEBI:60039"/>
    </reaction>
</comment>
<comment type="subcellular location">
    <subcellularLocation>
        <location evidence="4">Cell membrane</location>
        <topology evidence="3">Multi-pass membrane protein</topology>
    </subcellularLocation>
</comment>
<comment type="similarity">
    <text evidence="4">Belongs to the sodium:solute symporter (SSF) (TC 2.A.21) family.</text>
</comment>
<keyword id="KW-0029">Amino-acid transport</keyword>
<keyword id="KW-1003">Cell membrane</keyword>
<keyword id="KW-0406">Ion transport</keyword>
<keyword id="KW-0472">Membrane</keyword>
<keyword id="KW-0915">Sodium</keyword>
<keyword id="KW-0739">Sodium transport</keyword>
<keyword id="KW-0769">Symport</keyword>
<keyword id="KW-0812">Transmembrane</keyword>
<keyword id="KW-1133">Transmembrane helix</keyword>
<keyword id="KW-0813">Transport</keyword>
<reference key="1">
    <citation type="submission" date="2007-05" db="EMBL/GenBank/DDBJ databases">
        <title>Complete sequence of chromosome of Staphylococcus aureus subsp. aureus JH9.</title>
        <authorList>
            <consortium name="US DOE Joint Genome Institute"/>
            <person name="Copeland A."/>
            <person name="Lucas S."/>
            <person name="Lapidus A."/>
            <person name="Barry K."/>
            <person name="Detter J.C."/>
            <person name="Glavina del Rio T."/>
            <person name="Hammon N."/>
            <person name="Israni S."/>
            <person name="Pitluck S."/>
            <person name="Chain P."/>
            <person name="Malfatti S."/>
            <person name="Shin M."/>
            <person name="Vergez L."/>
            <person name="Schmutz J."/>
            <person name="Larimer F."/>
            <person name="Land M."/>
            <person name="Hauser L."/>
            <person name="Kyrpides N."/>
            <person name="Kim E."/>
            <person name="Tomasz A."/>
            <person name="Richardson P."/>
        </authorList>
    </citation>
    <scope>NUCLEOTIDE SEQUENCE [LARGE SCALE GENOMIC DNA]</scope>
    <source>
        <strain>JH9</strain>
    </source>
</reference>